<name>ORC1_DEBHA</name>
<organism>
    <name type="scientific">Debaryomyces hansenii (strain ATCC 36239 / CBS 767 / BCRC 21394 / JCM 1990 / NBRC 0083 / IGC 2968)</name>
    <name type="common">Yeast</name>
    <name type="synonym">Torulaspora hansenii</name>
    <dbReference type="NCBI Taxonomy" id="284592"/>
    <lineage>
        <taxon>Eukaryota</taxon>
        <taxon>Fungi</taxon>
        <taxon>Dikarya</taxon>
        <taxon>Ascomycota</taxon>
        <taxon>Saccharomycotina</taxon>
        <taxon>Pichiomycetes</taxon>
        <taxon>Debaryomycetaceae</taxon>
        <taxon>Debaryomyces</taxon>
    </lineage>
</organism>
<dbReference type="EMBL" id="CR382136">
    <property type="protein sequence ID" value="CAG87030.2"/>
    <property type="molecule type" value="Genomic_DNA"/>
</dbReference>
<dbReference type="RefSeq" id="XP_458878.2">
    <property type="nucleotide sequence ID" value="XM_458878.1"/>
</dbReference>
<dbReference type="SMR" id="Q6BSE2"/>
<dbReference type="FunCoup" id="Q6BSE2">
    <property type="interactions" value="456"/>
</dbReference>
<dbReference type="STRING" id="284592.Q6BSE2"/>
<dbReference type="GeneID" id="2901345"/>
<dbReference type="KEGG" id="dha:DEHA2D09504g"/>
<dbReference type="VEuPathDB" id="FungiDB:DEHA2D09504g"/>
<dbReference type="eggNOG" id="KOG1514">
    <property type="taxonomic scope" value="Eukaryota"/>
</dbReference>
<dbReference type="HOGENOM" id="CLU_012774_1_1_1"/>
<dbReference type="InParanoid" id="Q6BSE2"/>
<dbReference type="OMA" id="FFNWPTY"/>
<dbReference type="OrthoDB" id="1926878at2759"/>
<dbReference type="Proteomes" id="UP000000599">
    <property type="component" value="Chromosome D"/>
</dbReference>
<dbReference type="GO" id="GO:0005664">
    <property type="term" value="C:nuclear origin of replication recognition complex"/>
    <property type="evidence" value="ECO:0007669"/>
    <property type="project" value="TreeGrafter"/>
</dbReference>
<dbReference type="GO" id="GO:0005524">
    <property type="term" value="F:ATP binding"/>
    <property type="evidence" value="ECO:0007669"/>
    <property type="project" value="UniProtKB-KW"/>
</dbReference>
<dbReference type="GO" id="GO:0016887">
    <property type="term" value="F:ATP hydrolysis activity"/>
    <property type="evidence" value="ECO:0007669"/>
    <property type="project" value="InterPro"/>
</dbReference>
<dbReference type="GO" id="GO:0003682">
    <property type="term" value="F:chromatin binding"/>
    <property type="evidence" value="ECO:0007669"/>
    <property type="project" value="InterPro"/>
</dbReference>
<dbReference type="GO" id="GO:0003688">
    <property type="term" value="F:DNA replication origin binding"/>
    <property type="evidence" value="ECO:0007669"/>
    <property type="project" value="TreeGrafter"/>
</dbReference>
<dbReference type="GO" id="GO:0046872">
    <property type="term" value="F:metal ion binding"/>
    <property type="evidence" value="ECO:0007669"/>
    <property type="project" value="UniProtKB-KW"/>
</dbReference>
<dbReference type="GO" id="GO:0006270">
    <property type="term" value="P:DNA replication initiation"/>
    <property type="evidence" value="ECO:0007669"/>
    <property type="project" value="TreeGrafter"/>
</dbReference>
<dbReference type="GO" id="GO:0033314">
    <property type="term" value="P:mitotic DNA replication checkpoint signaling"/>
    <property type="evidence" value="ECO:0007669"/>
    <property type="project" value="TreeGrafter"/>
</dbReference>
<dbReference type="CDD" id="cd00009">
    <property type="entry name" value="AAA"/>
    <property type="match status" value="1"/>
</dbReference>
<dbReference type="CDD" id="cd04720">
    <property type="entry name" value="BAH_Orc1p_Yeast"/>
    <property type="match status" value="1"/>
</dbReference>
<dbReference type="FunFam" id="1.10.8.60:FF:000274">
    <property type="entry name" value="Origin recognition complex subunit 1"/>
    <property type="match status" value="1"/>
</dbReference>
<dbReference type="FunFam" id="3.40.50.300:FF:000199">
    <property type="entry name" value="Origin recognition complex subunit 1"/>
    <property type="match status" value="1"/>
</dbReference>
<dbReference type="Gene3D" id="1.10.8.60">
    <property type="match status" value="1"/>
</dbReference>
<dbReference type="Gene3D" id="2.30.30.490">
    <property type="match status" value="1"/>
</dbReference>
<dbReference type="Gene3D" id="3.40.50.300">
    <property type="entry name" value="P-loop containing nucleotide triphosphate hydrolases"/>
    <property type="match status" value="1"/>
</dbReference>
<dbReference type="InterPro" id="IPR003593">
    <property type="entry name" value="AAA+_ATPase"/>
</dbReference>
<dbReference type="InterPro" id="IPR041083">
    <property type="entry name" value="AAA_lid_10"/>
</dbReference>
<dbReference type="InterPro" id="IPR003959">
    <property type="entry name" value="ATPase_AAA_core"/>
</dbReference>
<dbReference type="InterPro" id="IPR001025">
    <property type="entry name" value="BAH_dom"/>
</dbReference>
<dbReference type="InterPro" id="IPR043151">
    <property type="entry name" value="BAH_sf"/>
</dbReference>
<dbReference type="InterPro" id="IPR050311">
    <property type="entry name" value="ORC1/CDC6"/>
</dbReference>
<dbReference type="InterPro" id="IPR048867">
    <property type="entry name" value="ORC1_wHTH"/>
</dbReference>
<dbReference type="InterPro" id="IPR027417">
    <property type="entry name" value="P-loop_NTPase"/>
</dbReference>
<dbReference type="PANTHER" id="PTHR10763">
    <property type="entry name" value="CELL DIVISION CONTROL PROTEIN 6-RELATED"/>
    <property type="match status" value="1"/>
</dbReference>
<dbReference type="PANTHER" id="PTHR10763:SF23">
    <property type="entry name" value="ORIGIN RECOGNITION COMPLEX SUBUNIT 1"/>
    <property type="match status" value="1"/>
</dbReference>
<dbReference type="Pfam" id="PF00004">
    <property type="entry name" value="AAA"/>
    <property type="match status" value="1"/>
</dbReference>
<dbReference type="Pfam" id="PF17872">
    <property type="entry name" value="AAA_lid_10"/>
    <property type="match status" value="1"/>
</dbReference>
<dbReference type="Pfam" id="PF01426">
    <property type="entry name" value="BAH"/>
    <property type="match status" value="1"/>
</dbReference>
<dbReference type="Pfam" id="PF21312">
    <property type="entry name" value="ORC1_wHTH"/>
    <property type="match status" value="1"/>
</dbReference>
<dbReference type="SMART" id="SM00382">
    <property type="entry name" value="AAA"/>
    <property type="match status" value="1"/>
</dbReference>
<dbReference type="SMART" id="SM00439">
    <property type="entry name" value="BAH"/>
    <property type="match status" value="1"/>
</dbReference>
<dbReference type="SUPFAM" id="SSF82061">
    <property type="entry name" value="BAH domain"/>
    <property type="match status" value="1"/>
</dbReference>
<dbReference type="SUPFAM" id="SSF52540">
    <property type="entry name" value="P-loop containing nucleoside triphosphate hydrolases"/>
    <property type="match status" value="1"/>
</dbReference>
<dbReference type="PROSITE" id="PS51038">
    <property type="entry name" value="BAH"/>
    <property type="match status" value="1"/>
</dbReference>
<feature type="chain" id="PRO_0000127071" description="Origin recognition complex subunit 1">
    <location>
        <begin position="1"/>
        <end position="810"/>
    </location>
</feature>
<feature type="domain" description="BAH" evidence="3">
    <location>
        <begin position="57"/>
        <end position="183"/>
    </location>
</feature>
<feature type="region of interest" description="Disordered" evidence="4">
    <location>
        <begin position="21"/>
        <end position="52"/>
    </location>
</feature>
<feature type="region of interest" description="Disordered" evidence="4">
    <location>
        <begin position="219"/>
        <end position="317"/>
    </location>
</feature>
<feature type="region of interest" description="Disordered" evidence="4">
    <location>
        <begin position="334"/>
        <end position="370"/>
    </location>
</feature>
<feature type="compositionally biased region" description="Polar residues" evidence="4">
    <location>
        <begin position="21"/>
        <end position="30"/>
    </location>
</feature>
<feature type="compositionally biased region" description="Basic and acidic residues" evidence="4">
    <location>
        <begin position="219"/>
        <end position="235"/>
    </location>
</feature>
<feature type="compositionally biased region" description="Acidic residues" evidence="4">
    <location>
        <begin position="247"/>
        <end position="280"/>
    </location>
</feature>
<feature type="compositionally biased region" description="Basic residues" evidence="4">
    <location>
        <begin position="286"/>
        <end position="295"/>
    </location>
</feature>
<feature type="binding site" evidence="2">
    <location>
        <begin position="423"/>
        <end position="431"/>
    </location>
    <ligand>
        <name>ATP</name>
        <dbReference type="ChEBI" id="CHEBI:30616"/>
    </ligand>
</feature>
<feature type="binding site" evidence="2">
    <location>
        <position position="508"/>
    </location>
    <ligand>
        <name>Mg(2+)</name>
        <dbReference type="ChEBI" id="CHEBI:18420"/>
    </ligand>
</feature>
<feature type="binding site" evidence="2">
    <location>
        <position position="509"/>
    </location>
    <ligand>
        <name>ATP</name>
        <dbReference type="ChEBI" id="CHEBI:30616"/>
    </ligand>
</feature>
<feature type="binding site" evidence="2">
    <location>
        <position position="509"/>
    </location>
    <ligand>
        <name>Mg(2+)</name>
        <dbReference type="ChEBI" id="CHEBI:18420"/>
    </ligand>
</feature>
<feature type="binding site" evidence="2">
    <location>
        <position position="542"/>
    </location>
    <ligand>
        <name>ATP</name>
        <dbReference type="ChEBI" id="CHEBI:30616"/>
    </ligand>
</feature>
<feature type="binding site" evidence="2">
    <location>
        <position position="615"/>
    </location>
    <ligand>
        <name>ATP</name>
        <dbReference type="ChEBI" id="CHEBI:30616"/>
    </ligand>
</feature>
<gene>
    <name type="primary">ORC1</name>
    <name type="ordered locus">DEHA2D09504g</name>
</gene>
<reference key="1">
    <citation type="journal article" date="2004" name="Nature">
        <title>Genome evolution in yeasts.</title>
        <authorList>
            <person name="Dujon B."/>
            <person name="Sherman D."/>
            <person name="Fischer G."/>
            <person name="Durrens P."/>
            <person name="Casaregola S."/>
            <person name="Lafontaine I."/>
            <person name="de Montigny J."/>
            <person name="Marck C."/>
            <person name="Neuveglise C."/>
            <person name="Talla E."/>
            <person name="Goffard N."/>
            <person name="Frangeul L."/>
            <person name="Aigle M."/>
            <person name="Anthouard V."/>
            <person name="Babour A."/>
            <person name="Barbe V."/>
            <person name="Barnay S."/>
            <person name="Blanchin S."/>
            <person name="Beckerich J.-M."/>
            <person name="Beyne E."/>
            <person name="Bleykasten C."/>
            <person name="Boisrame A."/>
            <person name="Boyer J."/>
            <person name="Cattolico L."/>
            <person name="Confanioleri F."/>
            <person name="de Daruvar A."/>
            <person name="Despons L."/>
            <person name="Fabre E."/>
            <person name="Fairhead C."/>
            <person name="Ferry-Dumazet H."/>
            <person name="Groppi A."/>
            <person name="Hantraye F."/>
            <person name="Hennequin C."/>
            <person name="Jauniaux N."/>
            <person name="Joyet P."/>
            <person name="Kachouri R."/>
            <person name="Kerrest A."/>
            <person name="Koszul R."/>
            <person name="Lemaire M."/>
            <person name="Lesur I."/>
            <person name="Ma L."/>
            <person name="Muller H."/>
            <person name="Nicaud J.-M."/>
            <person name="Nikolski M."/>
            <person name="Oztas S."/>
            <person name="Ozier-Kalogeropoulos O."/>
            <person name="Pellenz S."/>
            <person name="Potier S."/>
            <person name="Richard G.-F."/>
            <person name="Straub M.-L."/>
            <person name="Suleau A."/>
            <person name="Swennen D."/>
            <person name="Tekaia F."/>
            <person name="Wesolowski-Louvel M."/>
            <person name="Westhof E."/>
            <person name="Wirth B."/>
            <person name="Zeniou-Meyer M."/>
            <person name="Zivanovic Y."/>
            <person name="Bolotin-Fukuhara M."/>
            <person name="Thierry A."/>
            <person name="Bouchier C."/>
            <person name="Caudron B."/>
            <person name="Scarpelli C."/>
            <person name="Gaillardin C."/>
            <person name="Weissenbach J."/>
            <person name="Wincker P."/>
            <person name="Souciet J.-L."/>
        </authorList>
    </citation>
    <scope>NUCLEOTIDE SEQUENCE [LARGE SCALE GENOMIC DNA]</scope>
    <source>
        <strain>ATCC 36239 / CBS 767 / BCRC 21394 / JCM 1990 / NBRC 0083 / IGC 2968</strain>
    </source>
</reference>
<protein>
    <recommendedName>
        <fullName>Origin recognition complex subunit 1</fullName>
    </recommendedName>
</protein>
<evidence type="ECO:0000250" key="1"/>
<evidence type="ECO:0000250" key="2">
    <source>
        <dbReference type="UniProtKB" id="Q13415"/>
    </source>
</evidence>
<evidence type="ECO:0000255" key="3">
    <source>
        <dbReference type="PROSITE-ProRule" id="PRU00370"/>
    </source>
</evidence>
<evidence type="ECO:0000256" key="4">
    <source>
        <dbReference type="SAM" id="MobiDB-lite"/>
    </source>
</evidence>
<evidence type="ECO:0000305" key="5"/>
<proteinExistence type="inferred from homology"/>
<comment type="function">
    <text evidence="1">Component of the origin recognition complex (ORC) that binds origins of replication. It has a role in both chromosomal replication and mating type transcriptional silencing. Binds to the ARS consensus sequence (ACS) of origins of replication in an ATP-dependent manner (By similarity).</text>
</comment>
<comment type="subunit">
    <text evidence="1">ORC is composed of six subunits.</text>
</comment>
<comment type="subcellular location">
    <subcellularLocation>
        <location evidence="1">Nucleus</location>
    </subcellularLocation>
</comment>
<comment type="similarity">
    <text evidence="5">Belongs to the ORC1 family.</text>
</comment>
<accession>Q6BSE2</accession>
<keyword id="KW-0067">ATP-binding</keyword>
<keyword id="KW-0235">DNA replication</keyword>
<keyword id="KW-0238">DNA-binding</keyword>
<keyword id="KW-0460">Magnesium</keyword>
<keyword id="KW-0479">Metal-binding</keyword>
<keyword id="KW-0547">Nucleotide-binding</keyword>
<keyword id="KW-0539">Nucleus</keyword>
<keyword id="KW-1185">Reference proteome</keyword>
<sequence>MAKSQRDLKGWQYFLDDAELNNTDSVNGEPTTPSRRSRRGKSTSSQKISLKREEDELEIKEGDFLLVQQDNNSPEVAIVKEIKFGNDNFLDIIVSWFIRMRDIEEADLPKVEEYKERSQLNENELFITSYLDEVKLGEIIDKVNILSEEEFNNDIVIDDSNKASTFICRRGCDSAGELFTDVFDFRDLCVLFEKNHHEFIEFIRRKTVPVAYNANKTHDKSKSIKDKLDEVETKKPKQKTVSKQILDEEEENNDSSDEFESAIDLQDEPSSDELESDEDASESKNKSPRKRKASSKPKAVKEKQKRVKIPNNHSKFDDESRQFITSVVSPLNKRMKIKDSSKPSILALSPRKPKKGVSKGENGKNGSLGVDASSEAFKELKEKLHTSTRLSSLPCREDEFTSIYLNLETAIQEQTGCCLYVSGTPGVGKTATVREVIAQLRELTEMGELNDFDYLEINGLKLLSPNVAYEKLWEKISGLKVTASNAALLLESYFSQDTPRKPLIVLMDELDQIVTKKQNVMYNFFNWPTYSNSKLIVIAVANTMDLPERVLSNKISSRLGLRRIQFIGYTFEQLGSIIKHRLDMLTKQNKRKVIINSDAIGFASRKVASVSGDARRALTICRRAVEIAEKDFLSSKEDPGNEQEIENESYHVQISHISKAINETVNSPISQFLMSLPFASKLVLAGVLLRMKRSGLAENSLGDIIDEMKNSLTMLTSRDGDKVLEAIDSKMTLIDLLYGNGLLQNLDSTFNSKDTNIRILRFKYIVNELVENGILQQNVRGERHSLINLNISEEEIVSVLKRDKEISSIL</sequence>